<keyword id="KW-0648">Protein biosynthesis</keyword>
<keyword id="KW-0808">Transferase</keyword>
<organism>
    <name type="scientific">Rickettsia rickettsii</name>
    <dbReference type="NCBI Taxonomy" id="783"/>
    <lineage>
        <taxon>Bacteria</taxon>
        <taxon>Pseudomonadati</taxon>
        <taxon>Pseudomonadota</taxon>
        <taxon>Alphaproteobacteria</taxon>
        <taxon>Rickettsiales</taxon>
        <taxon>Rickettsiaceae</taxon>
        <taxon>Rickettsieae</taxon>
        <taxon>Rickettsia</taxon>
        <taxon>spotted fever group</taxon>
    </lineage>
</organism>
<accession>O33544</accession>
<name>FMT_RICRI</name>
<sequence>YFSYNDKIIKILEAEYLNADHHFTSGTVISDKLEIACGSGILRVKKLQQESKKALSIEEFLRGTNILKDTVLK</sequence>
<feature type="chain" id="PRO_0000083035" description="Methionyl-tRNA formyltransferase">
    <location>
        <begin position="1" status="less than"/>
        <end position="73"/>
    </location>
</feature>
<feature type="non-terminal residue">
    <location>
        <position position="1"/>
    </location>
</feature>
<dbReference type="EC" id="2.1.2.9" evidence="1"/>
<dbReference type="EMBL" id="Y13125">
    <property type="protein sequence ID" value="CAA73592.1"/>
    <property type="molecule type" value="Genomic_DNA"/>
</dbReference>
<dbReference type="SMR" id="O33544"/>
<dbReference type="GO" id="GO:0004479">
    <property type="term" value="F:methionyl-tRNA formyltransferase activity"/>
    <property type="evidence" value="ECO:0007669"/>
    <property type="project" value="UniProtKB-EC"/>
</dbReference>
<dbReference type="CDD" id="cd08704">
    <property type="entry name" value="Met_tRNA_FMT_C"/>
    <property type="match status" value="1"/>
</dbReference>
<dbReference type="Gene3D" id="3.10.25.10">
    <property type="entry name" value="Formyl transferase, C-terminal domain"/>
    <property type="match status" value="1"/>
</dbReference>
<dbReference type="InterPro" id="IPR005793">
    <property type="entry name" value="Formyl_trans_C"/>
</dbReference>
<dbReference type="InterPro" id="IPR037022">
    <property type="entry name" value="Formyl_trans_C_sf"/>
</dbReference>
<dbReference type="InterPro" id="IPR011034">
    <property type="entry name" value="Formyl_transferase-like_C_sf"/>
</dbReference>
<dbReference type="InterPro" id="IPR044135">
    <property type="entry name" value="Met-tRNA-FMT_C"/>
</dbReference>
<dbReference type="Pfam" id="PF02911">
    <property type="entry name" value="Formyl_trans_C"/>
    <property type="match status" value="1"/>
</dbReference>
<dbReference type="SUPFAM" id="SSF50486">
    <property type="entry name" value="FMT C-terminal domain-like"/>
    <property type="match status" value="1"/>
</dbReference>
<proteinExistence type="inferred from homology"/>
<comment type="function">
    <text evidence="1">Attaches a formyl group to the free amino group of methionyl-tRNA(fMet). The formyl group appears to play a dual role in the initiator identity of N-formylmethionyl-tRNA by promoting its recognition by IF2 and preventing the misappropriation of this tRNA by the elongation apparatus.</text>
</comment>
<comment type="catalytic activity">
    <reaction evidence="1">
        <text>L-methionyl-tRNA(fMet) + (6R)-10-formyltetrahydrofolate = N-formyl-L-methionyl-tRNA(fMet) + (6S)-5,6,7,8-tetrahydrofolate + H(+)</text>
        <dbReference type="Rhea" id="RHEA:24380"/>
        <dbReference type="Rhea" id="RHEA-COMP:9952"/>
        <dbReference type="Rhea" id="RHEA-COMP:9953"/>
        <dbReference type="ChEBI" id="CHEBI:15378"/>
        <dbReference type="ChEBI" id="CHEBI:57453"/>
        <dbReference type="ChEBI" id="CHEBI:78530"/>
        <dbReference type="ChEBI" id="CHEBI:78844"/>
        <dbReference type="ChEBI" id="CHEBI:195366"/>
        <dbReference type="EC" id="2.1.2.9"/>
    </reaction>
</comment>
<comment type="similarity">
    <text evidence="2">Belongs to the Fmt family.</text>
</comment>
<reference key="1">
    <citation type="submission" date="1997-05" db="EMBL/GenBank/DDBJ databases">
        <title>Rearrangement of the rRNA genes in Rickettsia preceeded the divergence of the typhus and the spotted fever group Rickettsia.</title>
        <authorList>
            <person name="Andersson S.G.E."/>
            <person name="Stothard D.R."/>
            <person name="Romedenne M."/>
            <person name="Viseur N."/>
            <person name="Fuerst P."/>
            <person name="Kurland C.G."/>
        </authorList>
    </citation>
    <scope>NUCLEOTIDE SEQUENCE [GENOMIC DNA]</scope>
</reference>
<gene>
    <name type="primary">fmt</name>
</gene>
<protein>
    <recommendedName>
        <fullName evidence="1">Methionyl-tRNA formyltransferase</fullName>
        <ecNumber evidence="1">2.1.2.9</ecNumber>
    </recommendedName>
</protein>
<evidence type="ECO:0000250" key="1">
    <source>
        <dbReference type="UniProtKB" id="P23882"/>
    </source>
</evidence>
<evidence type="ECO:0000305" key="2"/>